<sequence>MTEGTKKTSKKFKFFKFKGFGSLSNLPRSFTLRRSSASISRQSHLEPDTFEATQDDMVTVPKSPPAYARSSDMYSHMGTMPRPSIKKAQNSQAARQAQEAGPKPNLVPGGVPDPPGLEAAKEVMVKATGPLEDTPAMEPNPSAVEVDPIRKPEVPTGDVEEERPPRDVHSERAAGEPEAGSDYVKFSKEKYILDSSPEKLHKELEEELKLSSTDLRSHAWYHGRIPREVSETLVQRNGDFLIRDSLTSLGDYVLTCRWRNQALHFKINKVVVKAGESYTHIQYLFEQESFDHVPALVRYHVGSRKAVSEQSGAIIYCPVNRTFPLRYLEASYGLGQGSSKPASPVSPSGPKGSHMKRRSVTMTDGLTADKVTRSDGCPTSTSLPRPRDSIRSCALSMDQIPDLHSPMSPISESPSSPAYSTVTRVHAAPAAPSATALPASPVARRSSEPQLCPGSAPKTHGESDKGPHTSPSHTLGKASPSPSLSSYSDPDSGHYCQLQPPVRGSREWAATETSSQQARSYGERLKELSENGAPEGDWGKTFTVPIVEVTSSFNPATFQSLLIPRDNRPLEVGLLRKVKELLAEVDARTLARHVTKVDCLVARILGVTKEMQTLMGVRWGMELLTLPHGRQLRLDLLERFHTMSIMLAVDILGCTGSAEERAALLHKTIQLAAELRGTMGNMFSFAAVMGALDMAQISRLEQTWVTLRQRHTEGAILYEKKLKPFLKSLNEGKEGPPLSNTTFPHVLPLITLLECDSAPPEGPEPWGSTEHGVEVVLAHLEAARTVAHHGGLYHTNAEVKLQGFQARPELLEVFSTEFQMRLLWGSQGASSSQARRYEKFDKVLTALSHKLEPAVRSSEL</sequence>
<comment type="function">
    <text evidence="1 6 8">Acts as an adapter protein that mediates cell signaling pathways involved in cellular functions such as cell adhesion and migration, tissue organization, and the regulation of the immune response (PubMed:12432078, PubMed:20881139). Plays a role in integrin-mediated cell adhesion through BCAR1-CRK-RAPGEF1 signaling and activation of the small GTPase RAP1 (PubMed:12432078). Promotes cell migration and invasion through the extracellular matrix (PubMed:20881139). Required for marginal zone B-cell development and thymus-independent type 2 immune responses (By similarity). Mediates migration and adhesion of B cells in the splenic marginal zone via promoting hyperphosphorylation of NEDD9/CASL (By similarity). Plays a role in CXCL13-induced chemotaxis of B-cells (By similarity). Plays a role in the migration of olfactory sensory neurons (OSNs) into the forebrain and the innervation of the olfactory bulb by the OSN axons during development (By similarity). Required for the efficient tyrosine phosphorylation of BCAR1 in OSN axons (By similarity).</text>
</comment>
<comment type="function">
    <molecule>Isoform 1</molecule>
    <text evidence="1">Important regulator of chemokine-induced, integrin-mediated T lymphocyte adhesion and migration, acting upstream of RAP1 (By similarity). Required for tissue-specific adhesion of T lymphocytes to peripheral tissues (By similarity). Required for basal and CXCL2 stimulated serine-threonine phosphorylation of NEDD9 (By similarity). May be involved in the regulation of T-cell receptor-mediated IL2 production through the activation of the JNK pathway in T-cells (By similarity).</text>
</comment>
<comment type="function">
    <molecule>Isoform 2</molecule>
    <text evidence="1">May be involved in the BCAR1/CAS-mediated JNK activation pathway.</text>
</comment>
<comment type="subunit">
    <text evidence="1 6 7 9">Component of a complex comprised of SH2D3C, BCAR1/CAS, and CRK (PubMed:12432078). Within the complex, interacts with CRK and (via C-terminus) with BCAR1/CAS (via C-terminus) (PubMed:12432078, PubMed:17174122, PubMed:22081014). Interacts with NEDD9/HEF1 (By similarity). Interacts with EPHB2 (By similarity).</text>
</comment>
<comment type="subunit">
    <molecule>Isoform 1</molecule>
    <text evidence="1">Interacts with NEDD9/HEF1 (By similarity). Interacts with BCAR1/CAS (By similarity). Interacts with PTK2B (By similarity).</text>
</comment>
<comment type="subunit">
    <molecule>Isoform 2</molecule>
    <text evidence="1 8">Interacts (via C-terminus) with BCAR1/CAS (via C-terminus) (By similarity). Interacts with IGF1 (PubMed:20881139).</text>
</comment>
<comment type="interaction">
    <interactant intactId="EBI-745980">
        <id>Q8N5H7</id>
    </interactant>
    <interactant intactId="EBI-702093">
        <id>P56945</id>
        <label>BCAR1</label>
    </interactant>
    <organismsDiffer>false</organismsDiffer>
    <experiments>2</experiments>
</comment>
<comment type="interaction">
    <interactant intactId="EBI-745980">
        <id>Q8N5H7</id>
    </interactant>
    <interactant intactId="EBI-1379503">
        <id>P10721</id>
        <label>KIT</label>
    </interactant>
    <organismsDiffer>false</organismsDiffer>
    <experiments>4</experiments>
</comment>
<comment type="interaction">
    <interactant intactId="EBI-745980">
        <id>Q8N5H7</id>
    </interactant>
    <interactant intactId="EBI-1039152">
        <id>P08581</id>
        <label>MET</label>
    </interactant>
    <organismsDiffer>false</organismsDiffer>
    <experiments>4</experiments>
</comment>
<comment type="interaction">
    <interactant intactId="EBI-15952996">
        <id>Q8N5H7-2</id>
    </interactant>
    <interactant intactId="EBI-702093">
        <id>P56945</id>
        <label>BCAR1</label>
    </interactant>
    <organismsDiffer>false</organismsDiffer>
    <experiments>8</experiments>
</comment>
<comment type="subcellular location">
    <subcellularLocation>
        <location evidence="6 7">Cytoplasm</location>
    </subcellularLocation>
    <subcellularLocation>
        <location evidence="6">Cell membrane</location>
        <topology evidence="1">Peripheral membrane protein</topology>
    </subcellularLocation>
    <subcellularLocation>
        <location evidence="1">Cell projection</location>
        <location evidence="1">Axon</location>
    </subcellularLocation>
    <subcellularLocation>
        <location evidence="1">Cell projection</location>
        <location evidence="1">Ruffle membrane</location>
    </subcellularLocation>
    <text evidence="1">Associated with the membrane when EGF-stimulated (By similarity). Expressed at the cortical actin ring in B cells (By similarity).</text>
</comment>
<comment type="subcellular location">
    <molecule>Isoform 1</molecule>
    <subcellularLocation>
        <location evidence="7">Cell membrane</location>
        <topology evidence="7">Peripheral membrane protein</topology>
    </subcellularLocation>
</comment>
<comment type="alternative products">
    <event type="alternative splicing"/>
    <isoform>
        <id>Q8N5H7-1</id>
        <name>1</name>
        <name evidence="14">Chat-H</name>
        <sequence type="displayed"/>
    </isoform>
    <isoform>
        <id>Q8N5H7-2</id>
        <name>2</name>
        <sequence type="described" ref="VSP_017707"/>
    </isoform>
    <isoform>
        <id>Q8N5H7-3</id>
        <name>3</name>
        <sequence type="described" ref="VSP_017706"/>
    </isoform>
    <isoform>
        <id>Q8N5H7-4</id>
        <name>4</name>
        <sequence type="described" ref="VSP_017708"/>
    </isoform>
    <isoform>
        <id>Q8N5H7-5</id>
        <name>5</name>
        <sequence type="described" ref="VSP_044581 VSP_044582"/>
    </isoform>
    <isoform>
        <id>Q8N5H7-6</id>
        <name>6</name>
        <sequence type="described" ref="VSP_044581"/>
    </isoform>
</comment>
<comment type="tissue specificity">
    <molecule>Isoform 1</molecule>
    <text evidence="5">Ubiquitously expressed.</text>
</comment>
<comment type="domain">
    <text>The C-terminal Cdc25-homology/Ras-GEF domain adopts a closed conformation rendering it incapable of carrying out canonical exchange factor function, this closed conformation is required for interaction with BCAR1.</text>
</comment>
<comment type="PTM">
    <molecule>Isoform 1</molecule>
    <text evidence="1">Phosphorylated by MAPK/ERK upon T-cell receptor stimulation in T-cells.</text>
</comment>
<comment type="sequence caution" evidence="16">
    <conflict type="erroneous initiation">
        <sequence resource="EMBL-CDS" id="AAQ88456"/>
    </conflict>
</comment>
<accession>Q8N5H7</accession>
<accession>A8K5S8</accession>
<accession>E9PG48</accession>
<accession>Q5HYE5</accession>
<accession>Q5JU31</accession>
<accession>Q6UY42</accession>
<accession>Q8N6X3</accession>
<accession>Q9Y2X5</accession>
<reference key="1">
    <citation type="journal article" date="1999" name="J. Biol. Chem.">
        <title>NSP1 defines a novel family of adaptor proteins linking integrin and tyrosine kinase receptors to the c-Jun N-terminal kinase/stress-activated protein kinase signaling pathway.</title>
        <authorList>
            <person name="Lu Y."/>
            <person name="Brush J."/>
            <person name="Stewart T.A."/>
        </authorList>
    </citation>
    <scope>NUCLEOTIDE SEQUENCE [MRNA] (ISOFORM 2)</scope>
    <scope>TISSUE SPECIFICITY</scope>
    <source>
        <tissue>Placenta</tissue>
    </source>
</reference>
<reference key="2">
    <citation type="journal article" date="2003" name="Genome Res.">
        <title>The secreted protein discovery initiative (SPDI), a large-scale effort to identify novel human secreted and transmembrane proteins: a bioinformatics assessment.</title>
        <authorList>
            <person name="Clark H.F."/>
            <person name="Gurney A.L."/>
            <person name="Abaya E."/>
            <person name="Baker K."/>
            <person name="Baldwin D.T."/>
            <person name="Brush J."/>
            <person name="Chen J."/>
            <person name="Chow B."/>
            <person name="Chui C."/>
            <person name="Crowley C."/>
            <person name="Currell B."/>
            <person name="Deuel B."/>
            <person name="Dowd P."/>
            <person name="Eaton D."/>
            <person name="Foster J.S."/>
            <person name="Grimaldi C."/>
            <person name="Gu Q."/>
            <person name="Hass P.E."/>
            <person name="Heldens S."/>
            <person name="Huang A."/>
            <person name="Kim H.S."/>
            <person name="Klimowski L."/>
            <person name="Jin Y."/>
            <person name="Johnson S."/>
            <person name="Lee J."/>
            <person name="Lewis L."/>
            <person name="Liao D."/>
            <person name="Mark M.R."/>
            <person name="Robbie E."/>
            <person name="Sanchez C."/>
            <person name="Schoenfeld J."/>
            <person name="Seshagiri S."/>
            <person name="Simmons L."/>
            <person name="Singh J."/>
            <person name="Smith V."/>
            <person name="Stinson J."/>
            <person name="Vagts A."/>
            <person name="Vandlen R.L."/>
            <person name="Watanabe C."/>
            <person name="Wieand D."/>
            <person name="Woods K."/>
            <person name="Xie M.-H."/>
            <person name="Yansura D.G."/>
            <person name="Yi S."/>
            <person name="Yu G."/>
            <person name="Yuan J."/>
            <person name="Zhang M."/>
            <person name="Zhang Z."/>
            <person name="Goddard A.D."/>
            <person name="Wood W.I."/>
            <person name="Godowski P.J."/>
            <person name="Gray A.M."/>
        </authorList>
    </citation>
    <scope>NUCLEOTIDE SEQUENCE [LARGE SCALE MRNA] (ISOFORMS 2 AND 3)</scope>
</reference>
<reference key="3">
    <citation type="journal article" date="2004" name="Nat. Genet.">
        <title>Complete sequencing and characterization of 21,243 full-length human cDNAs.</title>
        <authorList>
            <person name="Ota T."/>
            <person name="Suzuki Y."/>
            <person name="Nishikawa T."/>
            <person name="Otsuki T."/>
            <person name="Sugiyama T."/>
            <person name="Irie R."/>
            <person name="Wakamatsu A."/>
            <person name="Hayashi K."/>
            <person name="Sato H."/>
            <person name="Nagai K."/>
            <person name="Kimura K."/>
            <person name="Makita H."/>
            <person name="Sekine M."/>
            <person name="Obayashi M."/>
            <person name="Nishi T."/>
            <person name="Shibahara T."/>
            <person name="Tanaka T."/>
            <person name="Ishii S."/>
            <person name="Yamamoto J."/>
            <person name="Saito K."/>
            <person name="Kawai Y."/>
            <person name="Isono Y."/>
            <person name="Nakamura Y."/>
            <person name="Nagahari K."/>
            <person name="Murakami K."/>
            <person name="Yasuda T."/>
            <person name="Iwayanagi T."/>
            <person name="Wagatsuma M."/>
            <person name="Shiratori A."/>
            <person name="Sudo H."/>
            <person name="Hosoiri T."/>
            <person name="Kaku Y."/>
            <person name="Kodaira H."/>
            <person name="Kondo H."/>
            <person name="Sugawara M."/>
            <person name="Takahashi M."/>
            <person name="Kanda K."/>
            <person name="Yokoi T."/>
            <person name="Furuya T."/>
            <person name="Kikkawa E."/>
            <person name="Omura Y."/>
            <person name="Abe K."/>
            <person name="Kamihara K."/>
            <person name="Katsuta N."/>
            <person name="Sato K."/>
            <person name="Tanikawa M."/>
            <person name="Yamazaki M."/>
            <person name="Ninomiya K."/>
            <person name="Ishibashi T."/>
            <person name="Yamashita H."/>
            <person name="Murakawa K."/>
            <person name="Fujimori K."/>
            <person name="Tanai H."/>
            <person name="Kimata M."/>
            <person name="Watanabe M."/>
            <person name="Hiraoka S."/>
            <person name="Chiba Y."/>
            <person name="Ishida S."/>
            <person name="Ono Y."/>
            <person name="Takiguchi S."/>
            <person name="Watanabe S."/>
            <person name="Yosida M."/>
            <person name="Hotuta T."/>
            <person name="Kusano J."/>
            <person name="Kanehori K."/>
            <person name="Takahashi-Fujii A."/>
            <person name="Hara H."/>
            <person name="Tanase T.-O."/>
            <person name="Nomura Y."/>
            <person name="Togiya S."/>
            <person name="Komai F."/>
            <person name="Hara R."/>
            <person name="Takeuchi K."/>
            <person name="Arita M."/>
            <person name="Imose N."/>
            <person name="Musashino K."/>
            <person name="Yuuki H."/>
            <person name="Oshima A."/>
            <person name="Sasaki N."/>
            <person name="Aotsuka S."/>
            <person name="Yoshikawa Y."/>
            <person name="Matsunawa H."/>
            <person name="Ichihara T."/>
            <person name="Shiohata N."/>
            <person name="Sano S."/>
            <person name="Moriya S."/>
            <person name="Momiyama H."/>
            <person name="Satoh N."/>
            <person name="Takami S."/>
            <person name="Terashima Y."/>
            <person name="Suzuki O."/>
            <person name="Nakagawa S."/>
            <person name="Senoh A."/>
            <person name="Mizoguchi H."/>
            <person name="Goto Y."/>
            <person name="Shimizu F."/>
            <person name="Wakebe H."/>
            <person name="Hishigaki H."/>
            <person name="Watanabe T."/>
            <person name="Sugiyama A."/>
            <person name="Takemoto M."/>
            <person name="Kawakami B."/>
            <person name="Yamazaki M."/>
            <person name="Watanabe K."/>
            <person name="Kumagai A."/>
            <person name="Itakura S."/>
            <person name="Fukuzumi Y."/>
            <person name="Fujimori Y."/>
            <person name="Komiyama M."/>
            <person name="Tashiro H."/>
            <person name="Tanigami A."/>
            <person name="Fujiwara T."/>
            <person name="Ono T."/>
            <person name="Yamada K."/>
            <person name="Fujii Y."/>
            <person name="Ozaki K."/>
            <person name="Hirao M."/>
            <person name="Ohmori Y."/>
            <person name="Kawabata A."/>
            <person name="Hikiji T."/>
            <person name="Kobatake N."/>
            <person name="Inagaki H."/>
            <person name="Ikema Y."/>
            <person name="Okamoto S."/>
            <person name="Okitani R."/>
            <person name="Kawakami T."/>
            <person name="Noguchi S."/>
            <person name="Itoh T."/>
            <person name="Shigeta K."/>
            <person name="Senba T."/>
            <person name="Matsumura K."/>
            <person name="Nakajima Y."/>
            <person name="Mizuno T."/>
            <person name="Morinaga M."/>
            <person name="Sasaki M."/>
            <person name="Togashi T."/>
            <person name="Oyama M."/>
            <person name="Hata H."/>
            <person name="Watanabe M."/>
            <person name="Komatsu T."/>
            <person name="Mizushima-Sugano J."/>
            <person name="Satoh T."/>
            <person name="Shirai Y."/>
            <person name="Takahashi Y."/>
            <person name="Nakagawa K."/>
            <person name="Okumura K."/>
            <person name="Nagase T."/>
            <person name="Nomura N."/>
            <person name="Kikuchi H."/>
            <person name="Masuho Y."/>
            <person name="Yamashita R."/>
            <person name="Nakai K."/>
            <person name="Yada T."/>
            <person name="Nakamura Y."/>
            <person name="Ohara O."/>
            <person name="Isogai T."/>
            <person name="Sugano S."/>
        </authorList>
    </citation>
    <scope>NUCLEOTIDE SEQUENCE [LARGE SCALE MRNA] (ISOFORMS 5 AND 6)</scope>
    <source>
        <tissue>Brain</tissue>
    </source>
</reference>
<reference key="4">
    <citation type="journal article" date="2007" name="BMC Genomics">
        <title>The full-ORF clone resource of the German cDNA consortium.</title>
        <authorList>
            <person name="Bechtel S."/>
            <person name="Rosenfelder H."/>
            <person name="Duda A."/>
            <person name="Schmidt C.P."/>
            <person name="Ernst U."/>
            <person name="Wellenreuther R."/>
            <person name="Mehrle A."/>
            <person name="Schuster C."/>
            <person name="Bahr A."/>
            <person name="Bloecker H."/>
            <person name="Heubner D."/>
            <person name="Hoerlein A."/>
            <person name="Michel G."/>
            <person name="Wedler H."/>
            <person name="Koehrer K."/>
            <person name="Ottenwaelder B."/>
            <person name="Poustka A."/>
            <person name="Wiemann S."/>
            <person name="Schupp I."/>
        </authorList>
    </citation>
    <scope>NUCLEOTIDE SEQUENCE [LARGE SCALE MRNA] (ISOFORM 4)</scope>
    <source>
        <tissue>Cervix</tissue>
    </source>
</reference>
<reference key="5">
    <citation type="journal article" date="2004" name="Nature">
        <title>DNA sequence and analysis of human chromosome 9.</title>
        <authorList>
            <person name="Humphray S.J."/>
            <person name="Oliver K."/>
            <person name="Hunt A.R."/>
            <person name="Plumb R.W."/>
            <person name="Loveland J.E."/>
            <person name="Howe K.L."/>
            <person name="Andrews T.D."/>
            <person name="Searle S."/>
            <person name="Hunt S.E."/>
            <person name="Scott C.E."/>
            <person name="Jones M.C."/>
            <person name="Ainscough R."/>
            <person name="Almeida J.P."/>
            <person name="Ambrose K.D."/>
            <person name="Ashwell R.I.S."/>
            <person name="Babbage A.K."/>
            <person name="Babbage S."/>
            <person name="Bagguley C.L."/>
            <person name="Bailey J."/>
            <person name="Banerjee R."/>
            <person name="Barker D.J."/>
            <person name="Barlow K.F."/>
            <person name="Bates K."/>
            <person name="Beasley H."/>
            <person name="Beasley O."/>
            <person name="Bird C.P."/>
            <person name="Bray-Allen S."/>
            <person name="Brown A.J."/>
            <person name="Brown J.Y."/>
            <person name="Burford D."/>
            <person name="Burrill W."/>
            <person name="Burton J."/>
            <person name="Carder C."/>
            <person name="Carter N.P."/>
            <person name="Chapman J.C."/>
            <person name="Chen Y."/>
            <person name="Clarke G."/>
            <person name="Clark S.Y."/>
            <person name="Clee C.M."/>
            <person name="Clegg S."/>
            <person name="Collier R.E."/>
            <person name="Corby N."/>
            <person name="Crosier M."/>
            <person name="Cummings A.T."/>
            <person name="Davies J."/>
            <person name="Dhami P."/>
            <person name="Dunn M."/>
            <person name="Dutta I."/>
            <person name="Dyer L.W."/>
            <person name="Earthrowl M.E."/>
            <person name="Faulkner L."/>
            <person name="Fleming C.J."/>
            <person name="Frankish A."/>
            <person name="Frankland J.A."/>
            <person name="French L."/>
            <person name="Fricker D.G."/>
            <person name="Garner P."/>
            <person name="Garnett J."/>
            <person name="Ghori J."/>
            <person name="Gilbert J.G.R."/>
            <person name="Glison C."/>
            <person name="Grafham D.V."/>
            <person name="Gribble S."/>
            <person name="Griffiths C."/>
            <person name="Griffiths-Jones S."/>
            <person name="Grocock R."/>
            <person name="Guy J."/>
            <person name="Hall R.E."/>
            <person name="Hammond S."/>
            <person name="Harley J.L."/>
            <person name="Harrison E.S.I."/>
            <person name="Hart E.A."/>
            <person name="Heath P.D."/>
            <person name="Henderson C.D."/>
            <person name="Hopkins B.L."/>
            <person name="Howard P.J."/>
            <person name="Howden P.J."/>
            <person name="Huckle E."/>
            <person name="Johnson C."/>
            <person name="Johnson D."/>
            <person name="Joy A.A."/>
            <person name="Kay M."/>
            <person name="Keenan S."/>
            <person name="Kershaw J.K."/>
            <person name="Kimberley A.M."/>
            <person name="King A."/>
            <person name="Knights A."/>
            <person name="Laird G.K."/>
            <person name="Langford C."/>
            <person name="Lawlor S."/>
            <person name="Leongamornlert D.A."/>
            <person name="Leversha M."/>
            <person name="Lloyd C."/>
            <person name="Lloyd D.M."/>
            <person name="Lovell J."/>
            <person name="Martin S."/>
            <person name="Mashreghi-Mohammadi M."/>
            <person name="Matthews L."/>
            <person name="McLaren S."/>
            <person name="McLay K.E."/>
            <person name="McMurray A."/>
            <person name="Milne S."/>
            <person name="Nickerson T."/>
            <person name="Nisbett J."/>
            <person name="Nordsiek G."/>
            <person name="Pearce A.V."/>
            <person name="Peck A.I."/>
            <person name="Porter K.M."/>
            <person name="Pandian R."/>
            <person name="Pelan S."/>
            <person name="Phillimore B."/>
            <person name="Povey S."/>
            <person name="Ramsey Y."/>
            <person name="Rand V."/>
            <person name="Scharfe M."/>
            <person name="Sehra H.K."/>
            <person name="Shownkeen R."/>
            <person name="Sims S.K."/>
            <person name="Skuce C.D."/>
            <person name="Smith M."/>
            <person name="Steward C.A."/>
            <person name="Swarbreck D."/>
            <person name="Sycamore N."/>
            <person name="Tester J."/>
            <person name="Thorpe A."/>
            <person name="Tracey A."/>
            <person name="Tromans A."/>
            <person name="Thomas D.W."/>
            <person name="Wall M."/>
            <person name="Wallis J.M."/>
            <person name="West A.P."/>
            <person name="Whitehead S.L."/>
            <person name="Willey D.L."/>
            <person name="Williams S.A."/>
            <person name="Wilming L."/>
            <person name="Wray P.W."/>
            <person name="Young L."/>
            <person name="Ashurst J.L."/>
            <person name="Coulson A."/>
            <person name="Blocker H."/>
            <person name="Durbin R.M."/>
            <person name="Sulston J.E."/>
            <person name="Hubbard T."/>
            <person name="Jackson M.J."/>
            <person name="Bentley D.R."/>
            <person name="Beck S."/>
            <person name="Rogers J."/>
            <person name="Dunham I."/>
        </authorList>
    </citation>
    <scope>NUCLEOTIDE SEQUENCE [LARGE SCALE GENOMIC DNA]</scope>
</reference>
<reference key="6">
    <citation type="journal article" date="2004" name="Genome Res.">
        <title>The status, quality, and expansion of the NIH full-length cDNA project: the Mammalian Gene Collection (MGC).</title>
        <authorList>
            <consortium name="The MGC Project Team"/>
        </authorList>
    </citation>
    <scope>NUCLEOTIDE SEQUENCE [LARGE SCALE MRNA] (ISOFORMS 1 AND 2)</scope>
    <source>
        <tissue>Pancreas</tissue>
        <tissue>Testis</tissue>
    </source>
</reference>
<reference key="7">
    <citation type="journal article" date="2002" name="J. Cell Sci.">
        <title>Novel function of Chat in controlling cell adhesion via Cas-Crk-C3G-pathway-mediated Rap1 activation.</title>
        <authorList>
            <person name="Sakakibara A."/>
            <person name="Ohba Y."/>
            <person name="Kurokawa K."/>
            <person name="Matsuda M."/>
            <person name="Hattori S."/>
        </authorList>
    </citation>
    <scope>FUNCTION</scope>
    <scope>IDENTIFICATION IN A COMPLEX WITH BCAR1 AND CRK</scope>
    <scope>SUBCELLULAR LOCATION</scope>
</reference>
<reference key="8">
    <citation type="journal article" date="2006" name="Immunity">
        <title>The hematopoietic isoform of Cas-Hef1-associated signal transducer regulates chemokine-induced inside-out signaling and T cell trafficking.</title>
        <authorList>
            <person name="Regelmann A.G."/>
            <person name="Danzl N.M."/>
            <person name="Wanjalla C."/>
            <person name="Alexandropoulos K."/>
        </authorList>
    </citation>
    <scope>INTERACTION WITH BCAR1</scope>
    <scope>SUBCELLULAR LOCATION</scope>
</reference>
<reference key="9">
    <citation type="journal article" date="2010" name="J. Neurosci.">
        <title>The SRC homology 2 domain protein Shep1 plays an important role in the penetration of olfactory sensory axons into the forebrain.</title>
        <authorList>
            <person name="Wang L."/>
            <person name="Vervoort V."/>
            <person name="Wallez Y."/>
            <person name="Core N."/>
            <person name="Cremer H."/>
            <person name="Pasquale E.B."/>
        </authorList>
    </citation>
    <scope>FUNCTION</scope>
    <scope>INTERACTION WITH IGF1</scope>
</reference>
<reference key="10">
    <citation type="journal article" date="2013" name="J. Proteome Res.">
        <title>Toward a comprehensive characterization of a human cancer cell phosphoproteome.</title>
        <authorList>
            <person name="Zhou H."/>
            <person name="Di Palma S."/>
            <person name="Preisinger C."/>
            <person name="Peng M."/>
            <person name="Polat A.N."/>
            <person name="Heck A.J."/>
            <person name="Mohammed S."/>
        </authorList>
    </citation>
    <scope>PHOSPHORYLATION [LARGE SCALE ANALYSIS] AT SER-440</scope>
    <scope>IDENTIFICATION BY MASS SPECTROMETRY [LARGE SCALE ANALYSIS]</scope>
    <source>
        <tissue>Erythroleukemia</tissue>
    </source>
</reference>
<reference key="11">
    <citation type="journal article" date="2011" name="Nat. Struct. Mol. Biol.">
        <title>NSP-Cas protein structures reveal a promiscuous interaction module in cell signaling.</title>
        <authorList>
            <person name="Mace P.D."/>
            <person name="Wallez Y."/>
            <person name="Dobaczewska M.K."/>
            <person name="Lee J.J."/>
            <person name="Robinson H."/>
            <person name="Pasquale E.B."/>
            <person name="Riedl S.J."/>
        </authorList>
    </citation>
    <scope>X-RAY CRYSTALLOGRAPHY (2.5 ANGSTROMS) OF 539-860 IN COMPLEX WITH BCAR1</scope>
</reference>
<organism>
    <name type="scientific">Homo sapiens</name>
    <name type="common">Human</name>
    <dbReference type="NCBI Taxonomy" id="9606"/>
    <lineage>
        <taxon>Eukaryota</taxon>
        <taxon>Metazoa</taxon>
        <taxon>Chordata</taxon>
        <taxon>Craniata</taxon>
        <taxon>Vertebrata</taxon>
        <taxon>Euteleostomi</taxon>
        <taxon>Mammalia</taxon>
        <taxon>Eutheria</taxon>
        <taxon>Euarchontoglires</taxon>
        <taxon>Primates</taxon>
        <taxon>Haplorrhini</taxon>
        <taxon>Catarrhini</taxon>
        <taxon>Hominidae</taxon>
        <taxon>Homo</taxon>
    </lineage>
</organism>
<proteinExistence type="evidence at protein level"/>
<gene>
    <name type="primary">SH2D3C</name>
    <name type="synonym">NSP3</name>
    <name type="ORF">UNQ272/PRO309/PRO34088</name>
</gene>
<feature type="chain" id="PRO_0000228833" description="SH2 domain-containing protein 3C">
    <location>
        <begin position="1"/>
        <end position="860"/>
    </location>
</feature>
<feature type="domain" description="SH2" evidence="3">
    <location>
        <begin position="220"/>
        <end position="319"/>
    </location>
</feature>
<feature type="domain" description="Ras-GEF" evidence="2">
    <location>
        <begin position="586"/>
        <end position="854"/>
    </location>
</feature>
<feature type="region of interest" description="Disordered" evidence="4">
    <location>
        <begin position="51"/>
        <end position="117"/>
    </location>
</feature>
<feature type="region of interest" description="Disordered" evidence="4">
    <location>
        <begin position="130"/>
        <end position="180"/>
    </location>
</feature>
<feature type="region of interest" description="Disordered" evidence="4">
    <location>
        <begin position="335"/>
        <end position="537"/>
    </location>
</feature>
<feature type="compositionally biased region" description="Basic and acidic residues" evidence="4">
    <location>
        <begin position="162"/>
        <end position="175"/>
    </location>
</feature>
<feature type="compositionally biased region" description="Low complexity" evidence="4">
    <location>
        <begin position="405"/>
        <end position="420"/>
    </location>
</feature>
<feature type="compositionally biased region" description="Low complexity" evidence="4">
    <location>
        <begin position="427"/>
        <end position="443"/>
    </location>
</feature>
<feature type="compositionally biased region" description="Low complexity" evidence="4">
    <location>
        <begin position="479"/>
        <end position="490"/>
    </location>
</feature>
<feature type="modified residue" description="Phosphoserine" evidence="1">
    <location>
        <position position="22"/>
    </location>
</feature>
<feature type="modified residue" description="Phosphotyrosine" evidence="1">
    <location>
        <position position="278"/>
    </location>
</feature>
<feature type="modified residue" description="Phosphotyrosine" evidence="1">
    <location>
        <position position="283"/>
    </location>
</feature>
<feature type="modified residue" description="Phosphoserine" evidence="1">
    <location>
        <position position="359"/>
    </location>
</feature>
<feature type="modified residue" description="Phosphoserine" evidence="17">
    <location>
        <position position="440"/>
    </location>
</feature>
<feature type="modified residue" description="Phosphotyrosine" evidence="1">
    <location>
        <position position="793"/>
    </location>
</feature>
<feature type="splice variant" id="VSP_017706" description="In isoform 3." evidence="11">
    <location>
        <begin position="1"/>
        <end position="354"/>
    </location>
</feature>
<feature type="splice variant" id="VSP_044581" description="In isoform 5 and isoform 6." evidence="12">
    <original>MTEGTKKTSKKFKFFKFKGFGSLSNLPRSFTLRRSSASISRQSHLEPDTFEATQDDMVTVPKSPPAYARSSDMYSHMGTMPRPSIKKAQNSQAARQAQEAGPKPNLVPGGVPDPPGLEAAKEVMVKATGPLEDTPAMEPNPSAVEVDPIRKPEVPTGDVEEERPPRDVHSERAAGEPEAGSDYVK</original>
    <variation>MTERCSLWSALSAAACCFYRGSFVQ</variation>
    <location>
        <begin position="1"/>
        <end position="185"/>
    </location>
</feature>
<feature type="splice variant" id="VSP_017707" description="In isoform 2." evidence="10 11 13">
    <original>MTEGTKKTSKKFKFFKFKGFGSLSNLPRSFTLRRSSASISRQSHLEPDTFEATQDDMVTVPKSPPAYARSSDMYSHMGTMPRPSIKKAQNSQAARQAQEAGPKPNLVPGGVPDPPGLEAAKEVMVKATGPLEDTPAMEPNPSAVEVDPIRKPEVPTGDVEEERPPRDVHSER</original>
    <variation>MTAVGRRCPALGSRG</variation>
    <location>
        <begin position="1"/>
        <end position="172"/>
    </location>
</feature>
<feature type="splice variant" id="VSP_017708" description="In isoform 4." evidence="15">
    <original>MTEGTKKTSKKFKFFKFKGFGSLSNLPRSFTLRRSSASISRQSHLEPDTFEATQDDMVTVPKSPPAYARSSDMYSHMGTMPRPSIKKAQNSQAARQAQEAGPKPNLVPGGVPDPPGLEAAKEVMVKATGPLEDTPAMEPNPSAVEVDPIRKPEVPTGDVEEERPPRDVHSER</original>
    <variation>MAPALPSPHKAVARPELLLDTAAHSGKLRAPDGGEGAECAGHNGGPSWGVGQGQSQEPSRQGIPQAPWLVSWQRRGFPPSSFCPGPLRTEKLRAGRCPLLLCGG</variation>
    <location>
        <begin position="1"/>
        <end position="172"/>
    </location>
</feature>
<feature type="splice variant" id="VSP_044582" description="In isoform 5." evidence="12">
    <original>F</original>
    <variation>VQF</variation>
    <location>
        <position position="186"/>
    </location>
</feature>
<feature type="sequence variant" id="VAR_051352" description="In dbSNP:rs10760500.">
    <original>L</original>
    <variation>F</variation>
    <location>
        <position position="23"/>
    </location>
</feature>
<feature type="sequence conflict" description="In Ref. 1; AAD28246 and 2; AAQ89948." evidence="16" ref="1 2">
    <original>R</original>
    <variation>C</variation>
    <location>
        <position position="445"/>
    </location>
</feature>
<feature type="sequence conflict" description="In Ref. 3; BAF84082." evidence="16" ref="3">
    <original>K</original>
    <variation>E</variation>
    <location>
        <position position="723"/>
    </location>
</feature>
<feature type="helix" evidence="18">
    <location>
        <begin position="555"/>
        <end position="557"/>
    </location>
</feature>
<feature type="strand" evidence="18">
    <location>
        <begin position="561"/>
        <end position="563"/>
    </location>
</feature>
<feature type="helix" evidence="18">
    <location>
        <begin position="572"/>
        <end position="583"/>
    </location>
</feature>
<feature type="helix" evidence="18">
    <location>
        <begin position="587"/>
        <end position="601"/>
    </location>
</feature>
<feature type="strand" evidence="18">
    <location>
        <begin position="604"/>
        <end position="606"/>
    </location>
</feature>
<feature type="helix" evidence="18">
    <location>
        <begin position="609"/>
        <end position="615"/>
    </location>
</feature>
<feature type="strand" evidence="18">
    <location>
        <begin position="616"/>
        <end position="618"/>
    </location>
</feature>
<feature type="helix" evidence="18">
    <location>
        <begin position="620"/>
        <end position="623"/>
    </location>
</feature>
<feature type="helix" evidence="18">
    <location>
        <begin position="627"/>
        <end position="629"/>
    </location>
</feature>
<feature type="helix" evidence="18">
    <location>
        <begin position="630"/>
        <end position="652"/>
    </location>
</feature>
<feature type="helix" evidence="18">
    <location>
        <begin position="658"/>
        <end position="677"/>
    </location>
</feature>
<feature type="helix" evidence="18">
    <location>
        <begin position="682"/>
        <end position="692"/>
    </location>
</feature>
<feature type="helix" evidence="18">
    <location>
        <begin position="695"/>
        <end position="698"/>
    </location>
</feature>
<feature type="helix" evidence="18">
    <location>
        <begin position="701"/>
        <end position="710"/>
    </location>
</feature>
<feature type="helix" evidence="18">
    <location>
        <begin position="712"/>
        <end position="720"/>
    </location>
</feature>
<feature type="helix" evidence="18">
    <location>
        <begin position="722"/>
        <end position="730"/>
    </location>
</feature>
<feature type="helix" evidence="18">
    <location>
        <begin position="738"/>
        <end position="740"/>
    </location>
</feature>
<feature type="helix" evidence="18">
    <location>
        <begin position="747"/>
        <end position="752"/>
    </location>
</feature>
<feature type="helix" evidence="18">
    <location>
        <begin position="773"/>
        <end position="787"/>
    </location>
</feature>
<feature type="helix" evidence="18">
    <location>
        <begin position="790"/>
        <end position="800"/>
    </location>
</feature>
<feature type="turn" evidence="18">
    <location>
        <begin position="801"/>
        <end position="803"/>
    </location>
</feature>
<feature type="helix" evidence="18">
    <location>
        <begin position="808"/>
        <end position="813"/>
    </location>
</feature>
<feature type="helix" evidence="18">
    <location>
        <begin position="816"/>
        <end position="824"/>
    </location>
</feature>
<feature type="helix" evidence="18">
    <location>
        <begin position="828"/>
        <end position="830"/>
    </location>
</feature>
<feature type="helix" evidence="18">
    <location>
        <begin position="833"/>
        <end position="851"/>
    </location>
</feature>
<feature type="sequence conflict" description="In Ref. 4; CAI46101." evidence="16" ref="4">
    <original>L</original>
    <variation>T</variation>
    <location sequence="Q8N5H7-3">
        <position position="29"/>
    </location>
</feature>
<keyword id="KW-0002">3D-structure</keyword>
<keyword id="KW-0025">Alternative splicing</keyword>
<keyword id="KW-1003">Cell membrane</keyword>
<keyword id="KW-0966">Cell projection</keyword>
<keyword id="KW-0963">Cytoplasm</keyword>
<keyword id="KW-0472">Membrane</keyword>
<keyword id="KW-0597">Phosphoprotein</keyword>
<keyword id="KW-1267">Proteomics identification</keyword>
<keyword id="KW-1185">Reference proteome</keyword>
<keyword id="KW-0727">SH2 domain</keyword>
<name>SH2D3_HUMAN</name>
<dbReference type="EMBL" id="AF124251">
    <property type="protein sequence ID" value="AAD28246.1"/>
    <property type="molecule type" value="mRNA"/>
</dbReference>
<dbReference type="EMBL" id="AY358089">
    <property type="protein sequence ID" value="AAQ88456.1"/>
    <property type="status" value="ALT_INIT"/>
    <property type="molecule type" value="Transcribed_RNA"/>
</dbReference>
<dbReference type="EMBL" id="AY358440">
    <property type="protein sequence ID" value="AAQ89948.1"/>
    <property type="molecule type" value="mRNA"/>
</dbReference>
<dbReference type="EMBL" id="AK056068">
    <property type="protein sequence ID" value="BAG51614.1"/>
    <property type="molecule type" value="mRNA"/>
</dbReference>
<dbReference type="EMBL" id="AK291393">
    <property type="protein sequence ID" value="BAF84082.1"/>
    <property type="molecule type" value="mRNA"/>
</dbReference>
<dbReference type="EMBL" id="BX647905">
    <property type="protein sequence ID" value="CAI46101.1"/>
    <property type="molecule type" value="mRNA"/>
</dbReference>
<dbReference type="EMBL" id="AL162586">
    <property type="status" value="NOT_ANNOTATED_CDS"/>
    <property type="molecule type" value="Genomic_DNA"/>
</dbReference>
<dbReference type="EMBL" id="AL162426">
    <property type="status" value="NOT_ANNOTATED_CDS"/>
    <property type="molecule type" value="Genomic_DNA"/>
</dbReference>
<dbReference type="EMBL" id="BC027962">
    <property type="protein sequence ID" value="AAH27962.1"/>
    <property type="molecule type" value="mRNA"/>
</dbReference>
<dbReference type="EMBL" id="BC032365">
    <property type="protein sequence ID" value="AAH32365.1"/>
    <property type="molecule type" value="mRNA"/>
</dbReference>
<dbReference type="CCDS" id="CCDS48026.1">
    <molecule id="Q8N5H7-5"/>
</dbReference>
<dbReference type="CCDS" id="CCDS48027.1">
    <molecule id="Q8N5H7-6"/>
</dbReference>
<dbReference type="CCDS" id="CCDS48028.1">
    <molecule id="Q8N5H7-3"/>
</dbReference>
<dbReference type="CCDS" id="CCDS59145.1">
    <molecule id="Q8N5H7-4"/>
</dbReference>
<dbReference type="CCDS" id="CCDS6877.1">
    <molecule id="Q8N5H7-1"/>
</dbReference>
<dbReference type="CCDS" id="CCDS6878.1">
    <molecule id="Q8N5H7-2"/>
</dbReference>
<dbReference type="RefSeq" id="NP_001136003.1">
    <molecule id="Q8N5H7-3"/>
    <property type="nucleotide sequence ID" value="NM_001142531.1"/>
</dbReference>
<dbReference type="RefSeq" id="NP_001136004.1">
    <molecule id="Q8N5H7-3"/>
    <property type="nucleotide sequence ID" value="NM_001142532.1"/>
</dbReference>
<dbReference type="RefSeq" id="NP_001136005.1">
    <molecule id="Q8N5H7-5"/>
    <property type="nucleotide sequence ID" value="NM_001142533.1"/>
</dbReference>
<dbReference type="RefSeq" id="NP_001136006.1">
    <molecule id="Q8N5H7-6"/>
    <property type="nucleotide sequence ID" value="NM_001142534.1"/>
</dbReference>
<dbReference type="RefSeq" id="NP_001239263.1">
    <molecule id="Q8N5H7-4"/>
    <property type="nucleotide sequence ID" value="NM_001252334.2"/>
</dbReference>
<dbReference type="RefSeq" id="NP_005480.2">
    <molecule id="Q8N5H7-2"/>
    <property type="nucleotide sequence ID" value="NM_005489.4"/>
</dbReference>
<dbReference type="RefSeq" id="NP_733745.1">
    <molecule id="Q8N5H7-1"/>
    <property type="nucleotide sequence ID" value="NM_170600.3"/>
</dbReference>
<dbReference type="RefSeq" id="XP_005251696.1">
    <property type="nucleotide sequence ID" value="XM_005251639.1"/>
</dbReference>
<dbReference type="RefSeq" id="XP_011516419.1">
    <property type="nucleotide sequence ID" value="XM_011518117.2"/>
</dbReference>
<dbReference type="RefSeq" id="XP_016869663.1">
    <property type="nucleotide sequence ID" value="XM_017014174.1"/>
</dbReference>
<dbReference type="PDB" id="3T6G">
    <property type="method" value="X-ray"/>
    <property type="resolution" value="2.50 A"/>
    <property type="chains" value="A/C=539-860"/>
</dbReference>
<dbReference type="PDBsum" id="3T6G"/>
<dbReference type="SMR" id="Q8N5H7"/>
<dbReference type="BioGRID" id="115355">
    <property type="interactions" value="167"/>
</dbReference>
<dbReference type="DIP" id="DIP-59443N"/>
<dbReference type="FunCoup" id="Q8N5H7">
    <property type="interactions" value="860"/>
</dbReference>
<dbReference type="IntAct" id="Q8N5H7">
    <property type="interactions" value="161"/>
</dbReference>
<dbReference type="MINT" id="Q8N5H7"/>
<dbReference type="STRING" id="9606.ENSP00000317817"/>
<dbReference type="iPTMnet" id="Q8N5H7"/>
<dbReference type="PhosphoSitePlus" id="Q8N5H7"/>
<dbReference type="SwissPalm" id="Q8N5H7"/>
<dbReference type="BioMuta" id="SH2D3C"/>
<dbReference type="DMDM" id="74751027"/>
<dbReference type="jPOST" id="Q8N5H7"/>
<dbReference type="MassIVE" id="Q8N5H7"/>
<dbReference type="PaxDb" id="9606-ENSP00000317817"/>
<dbReference type="PeptideAtlas" id="Q8N5H7"/>
<dbReference type="ProteomicsDB" id="20244"/>
<dbReference type="ProteomicsDB" id="72054">
    <molecule id="Q8N5H7-1"/>
</dbReference>
<dbReference type="ProteomicsDB" id="72055">
    <molecule id="Q8N5H7-2"/>
</dbReference>
<dbReference type="ProteomicsDB" id="72056">
    <molecule id="Q8N5H7-3"/>
</dbReference>
<dbReference type="ProteomicsDB" id="72057">
    <molecule id="Q8N5H7-4"/>
</dbReference>
<dbReference type="ProteomicsDB" id="72058">
    <molecule id="Q8N5H7-5"/>
</dbReference>
<dbReference type="Antibodypedia" id="30796">
    <property type="antibodies" value="280 antibodies from 25 providers"/>
</dbReference>
<dbReference type="DNASU" id="10044"/>
<dbReference type="Ensembl" id="ENST00000314830.13">
    <molecule id="Q8N5H7-1"/>
    <property type="protein sequence ID" value="ENSP00000317817.8"/>
    <property type="gene ID" value="ENSG00000095370.20"/>
</dbReference>
<dbReference type="Ensembl" id="ENST00000373276.7">
    <molecule id="Q8N5H7-4"/>
    <property type="protein sequence ID" value="ENSP00000362373.3"/>
    <property type="gene ID" value="ENSG00000095370.20"/>
</dbReference>
<dbReference type="Ensembl" id="ENST00000373277.8">
    <molecule id="Q8N5H7-2"/>
    <property type="protein sequence ID" value="ENSP00000362374.4"/>
    <property type="gene ID" value="ENSG00000095370.20"/>
</dbReference>
<dbReference type="Ensembl" id="ENST00000420366.5">
    <molecule id="Q8N5H7-5"/>
    <property type="protein sequence ID" value="ENSP00000388536.1"/>
    <property type="gene ID" value="ENSG00000095370.20"/>
</dbReference>
<dbReference type="Ensembl" id="ENST00000429553.5">
    <molecule id="Q8N5H7-3"/>
    <property type="protein sequence ID" value="ENSP00000394632.1"/>
    <property type="gene ID" value="ENSG00000095370.20"/>
</dbReference>
<dbReference type="Ensembl" id="ENST00000629203.2">
    <molecule id="Q8N5H7-6"/>
    <property type="protein sequence ID" value="ENSP00000485866.1"/>
    <property type="gene ID" value="ENSG00000095370.20"/>
</dbReference>
<dbReference type="GeneID" id="10044"/>
<dbReference type="KEGG" id="hsa:10044"/>
<dbReference type="MANE-Select" id="ENST00000314830.13">
    <property type="protein sequence ID" value="ENSP00000317817.8"/>
    <property type="RefSeq nucleotide sequence ID" value="NM_170600.3"/>
    <property type="RefSeq protein sequence ID" value="NP_733745.1"/>
</dbReference>
<dbReference type="UCSC" id="uc004bry.4">
    <molecule id="Q8N5H7-1"/>
    <property type="organism name" value="human"/>
</dbReference>
<dbReference type="AGR" id="HGNC:16884"/>
<dbReference type="CTD" id="10044"/>
<dbReference type="DisGeNET" id="10044"/>
<dbReference type="GeneCards" id="SH2D3C"/>
<dbReference type="HGNC" id="HGNC:16884">
    <property type="gene designation" value="SH2D3C"/>
</dbReference>
<dbReference type="HPA" id="ENSG00000095370">
    <property type="expression patterns" value="Low tissue specificity"/>
</dbReference>
<dbReference type="MIM" id="604722">
    <property type="type" value="gene"/>
</dbReference>
<dbReference type="neXtProt" id="NX_Q8N5H7"/>
<dbReference type="OpenTargets" id="ENSG00000095370"/>
<dbReference type="PharmGKB" id="PA38191"/>
<dbReference type="VEuPathDB" id="HostDB:ENSG00000095370"/>
<dbReference type="eggNOG" id="ENOG502QPX3">
    <property type="taxonomic scope" value="Eukaryota"/>
</dbReference>
<dbReference type="GeneTree" id="ENSGT00940000154130"/>
<dbReference type="HOGENOM" id="CLU_015281_0_0_1"/>
<dbReference type="InParanoid" id="Q8N5H7"/>
<dbReference type="OMA" id="MVHNSRM"/>
<dbReference type="OrthoDB" id="2412973at2759"/>
<dbReference type="PAN-GO" id="Q8N5H7">
    <property type="GO annotations" value="1 GO annotation based on evolutionary models"/>
</dbReference>
<dbReference type="PhylomeDB" id="Q8N5H7"/>
<dbReference type="TreeFam" id="TF323756"/>
<dbReference type="PathwayCommons" id="Q8N5H7"/>
<dbReference type="SignaLink" id="Q8N5H7"/>
<dbReference type="BioGRID-ORCS" id="10044">
    <property type="hits" value="9 hits in 1149 CRISPR screens"/>
</dbReference>
<dbReference type="ChiTaRS" id="SH2D3C">
    <property type="organism name" value="human"/>
</dbReference>
<dbReference type="EvolutionaryTrace" id="Q8N5H7"/>
<dbReference type="GeneWiki" id="SH2D3C"/>
<dbReference type="GenomeRNAi" id="10044"/>
<dbReference type="Pharos" id="Q8N5H7">
    <property type="development level" value="Tbio"/>
</dbReference>
<dbReference type="PRO" id="PR:Q8N5H7"/>
<dbReference type="Proteomes" id="UP000005640">
    <property type="component" value="Chromosome 9"/>
</dbReference>
<dbReference type="RNAct" id="Q8N5H7">
    <property type="molecule type" value="protein"/>
</dbReference>
<dbReference type="Bgee" id="ENSG00000095370">
    <property type="expression patterns" value="Expressed in granulocyte and 141 other cell types or tissues"/>
</dbReference>
<dbReference type="ExpressionAtlas" id="Q8N5H7">
    <property type="expression patterns" value="baseline and differential"/>
</dbReference>
<dbReference type="GO" id="GO:0030424">
    <property type="term" value="C:axon"/>
    <property type="evidence" value="ECO:0007669"/>
    <property type="project" value="UniProtKB-SubCell"/>
</dbReference>
<dbReference type="GO" id="GO:0005829">
    <property type="term" value="C:cytosol"/>
    <property type="evidence" value="ECO:0000314"/>
    <property type="project" value="HPA"/>
</dbReference>
<dbReference type="GO" id="GO:0032587">
    <property type="term" value="C:ruffle membrane"/>
    <property type="evidence" value="ECO:0007669"/>
    <property type="project" value="UniProtKB-SubCell"/>
</dbReference>
<dbReference type="GO" id="GO:0005085">
    <property type="term" value="F:guanyl-nucleotide exchange factor activity"/>
    <property type="evidence" value="ECO:0007669"/>
    <property type="project" value="InterPro"/>
</dbReference>
<dbReference type="GO" id="GO:0001784">
    <property type="term" value="F:phosphotyrosine residue binding"/>
    <property type="evidence" value="ECO:0007669"/>
    <property type="project" value="InterPro"/>
</dbReference>
<dbReference type="GO" id="GO:0007254">
    <property type="term" value="P:JNK cascade"/>
    <property type="evidence" value="ECO:0000304"/>
    <property type="project" value="ProtInc"/>
</dbReference>
<dbReference type="GO" id="GO:0007264">
    <property type="term" value="P:small GTPase-mediated signal transduction"/>
    <property type="evidence" value="ECO:0007669"/>
    <property type="project" value="InterPro"/>
</dbReference>
<dbReference type="CDD" id="cd10337">
    <property type="entry name" value="SH2_BCAR3"/>
    <property type="match status" value="1"/>
</dbReference>
<dbReference type="DisProt" id="DP02872"/>
<dbReference type="FunFam" id="1.10.840.10:FF:000007">
    <property type="entry name" value="SH2 domain containing 3C (Predicted)"/>
    <property type="match status" value="1"/>
</dbReference>
<dbReference type="FunFam" id="3.30.505.10:FF:000013">
    <property type="entry name" value="SH2 domain-containing protein 3C isoform X1"/>
    <property type="match status" value="1"/>
</dbReference>
<dbReference type="Gene3D" id="1.10.840.10">
    <property type="entry name" value="Ras guanine-nucleotide exchange factors catalytic domain"/>
    <property type="match status" value="1"/>
</dbReference>
<dbReference type="Gene3D" id="3.30.505.10">
    <property type="entry name" value="SH2 domain"/>
    <property type="match status" value="1"/>
</dbReference>
<dbReference type="InterPro" id="IPR023578">
    <property type="entry name" value="Ras_GEF_dom_sf"/>
</dbReference>
<dbReference type="InterPro" id="IPR001895">
    <property type="entry name" value="RASGEF_cat_dom"/>
</dbReference>
<dbReference type="InterPro" id="IPR036964">
    <property type="entry name" value="RASGEF_cat_dom_sf"/>
</dbReference>
<dbReference type="InterPro" id="IPR000980">
    <property type="entry name" value="SH2"/>
</dbReference>
<dbReference type="InterPro" id="IPR051853">
    <property type="entry name" value="SH2-Ras-GEF_adapter"/>
</dbReference>
<dbReference type="InterPro" id="IPR036860">
    <property type="entry name" value="SH2_dom_sf"/>
</dbReference>
<dbReference type="InterPro" id="IPR044102">
    <property type="entry name" value="SH2_SHEP1/BCAR3/NSP1"/>
</dbReference>
<dbReference type="PANTHER" id="PTHR14247">
    <property type="entry name" value="BREAST CANCER ANTI-ESTROGEN RESISTANCE PROTEIN 3 HOMOLOG-LIKE PROTEIN"/>
    <property type="match status" value="1"/>
</dbReference>
<dbReference type="PANTHER" id="PTHR14247:SF6">
    <property type="entry name" value="SH2 DOMAIN-CONTAINING PROTEIN 3C"/>
    <property type="match status" value="1"/>
</dbReference>
<dbReference type="Pfam" id="PF00617">
    <property type="entry name" value="RasGEF"/>
    <property type="match status" value="1"/>
</dbReference>
<dbReference type="Pfam" id="PF00017">
    <property type="entry name" value="SH2"/>
    <property type="match status" value="1"/>
</dbReference>
<dbReference type="SMART" id="SM00147">
    <property type="entry name" value="RasGEF"/>
    <property type="match status" value="1"/>
</dbReference>
<dbReference type="SMART" id="SM00252">
    <property type="entry name" value="SH2"/>
    <property type="match status" value="1"/>
</dbReference>
<dbReference type="SUPFAM" id="SSF48366">
    <property type="entry name" value="Ras GEF"/>
    <property type="match status" value="1"/>
</dbReference>
<dbReference type="SUPFAM" id="SSF55550">
    <property type="entry name" value="SH2 domain"/>
    <property type="match status" value="1"/>
</dbReference>
<dbReference type="PROSITE" id="PS50009">
    <property type="entry name" value="RASGEF_CAT"/>
    <property type="match status" value="1"/>
</dbReference>
<dbReference type="PROSITE" id="PS50001">
    <property type="entry name" value="SH2"/>
    <property type="match status" value="1"/>
</dbReference>
<evidence type="ECO:0000250" key="1">
    <source>
        <dbReference type="UniProtKB" id="Q9QZS8"/>
    </source>
</evidence>
<evidence type="ECO:0000255" key="2">
    <source>
        <dbReference type="PROSITE-ProRule" id="PRU00168"/>
    </source>
</evidence>
<evidence type="ECO:0000255" key="3">
    <source>
        <dbReference type="PROSITE-ProRule" id="PRU00191"/>
    </source>
</evidence>
<evidence type="ECO:0000256" key="4">
    <source>
        <dbReference type="SAM" id="MobiDB-lite"/>
    </source>
</evidence>
<evidence type="ECO:0000269" key="5">
    <source>
    </source>
</evidence>
<evidence type="ECO:0000269" key="6">
    <source>
    </source>
</evidence>
<evidence type="ECO:0000269" key="7">
    <source>
    </source>
</evidence>
<evidence type="ECO:0000269" key="8">
    <source>
    </source>
</evidence>
<evidence type="ECO:0000269" key="9">
    <source>
    </source>
</evidence>
<evidence type="ECO:0000303" key="10">
    <source>
    </source>
</evidence>
<evidence type="ECO:0000303" key="11">
    <source>
    </source>
</evidence>
<evidence type="ECO:0000303" key="12">
    <source>
    </source>
</evidence>
<evidence type="ECO:0000303" key="13">
    <source>
    </source>
</evidence>
<evidence type="ECO:0000303" key="14">
    <source>
    </source>
</evidence>
<evidence type="ECO:0000303" key="15">
    <source>
    </source>
</evidence>
<evidence type="ECO:0000305" key="16"/>
<evidence type="ECO:0007744" key="17">
    <source>
    </source>
</evidence>
<evidence type="ECO:0007829" key="18">
    <source>
        <dbReference type="PDB" id="3T6G"/>
    </source>
</evidence>
<protein>
    <recommendedName>
        <fullName>SH2 domain-containing protein 3C</fullName>
    </recommendedName>
    <alternativeName>
        <fullName evidence="14">Cas/HEF1-associated signal transducer</fullName>
        <shortName evidence="14">Chat-H</shortName>
    </alternativeName>
    <alternativeName>
        <fullName>Novel SH2-containing protein 3</fullName>
    </alternativeName>
    <alternativeName>
        <fullName>SH2 domain-containing Eph receptor-binding protein 1</fullName>
        <shortName>SHEP1</shortName>
    </alternativeName>
</protein>